<evidence type="ECO:0000255" key="1">
    <source>
        <dbReference type="HAMAP-Rule" id="MF_00228"/>
    </source>
</evidence>
<keyword id="KW-0067">ATP-binding</keyword>
<keyword id="KW-0418">Kinase</keyword>
<keyword id="KW-0460">Magnesium</keyword>
<keyword id="KW-0479">Metal-binding</keyword>
<keyword id="KW-0547">Nucleotide-binding</keyword>
<keyword id="KW-0784">Thiamine biosynthesis</keyword>
<keyword id="KW-0808">Transferase</keyword>
<name>THIM2_STRZT</name>
<feature type="chain" id="PRO_0000383905" description="Hydroxyethylthiazole kinase 2">
    <location>
        <begin position="1"/>
        <end position="267"/>
    </location>
</feature>
<feature type="binding site" evidence="1">
    <location>
        <position position="41"/>
    </location>
    <ligand>
        <name>substrate</name>
    </ligand>
</feature>
<feature type="binding site" evidence="1">
    <location>
        <position position="116"/>
    </location>
    <ligand>
        <name>ATP</name>
        <dbReference type="ChEBI" id="CHEBI:30616"/>
    </ligand>
</feature>
<feature type="binding site" evidence="1">
    <location>
        <position position="166"/>
    </location>
    <ligand>
        <name>ATP</name>
        <dbReference type="ChEBI" id="CHEBI:30616"/>
    </ligand>
</feature>
<feature type="binding site" evidence="1">
    <location>
        <position position="193"/>
    </location>
    <ligand>
        <name>substrate</name>
    </ligand>
</feature>
<reference key="1">
    <citation type="journal article" date="2010" name="Genome Biol.">
        <title>Structure and dynamics of the pan-genome of Streptococcus pneumoniae and closely related species.</title>
        <authorList>
            <person name="Donati C."/>
            <person name="Hiller N.L."/>
            <person name="Tettelin H."/>
            <person name="Muzzi A."/>
            <person name="Croucher N.J."/>
            <person name="Angiuoli S.V."/>
            <person name="Oggioni M."/>
            <person name="Dunning Hotopp J.C."/>
            <person name="Hu F.Z."/>
            <person name="Riley D.R."/>
            <person name="Covacci A."/>
            <person name="Mitchell T.J."/>
            <person name="Bentley S.D."/>
            <person name="Kilian M."/>
            <person name="Ehrlich G.D."/>
            <person name="Rappuoli R."/>
            <person name="Moxon E.R."/>
            <person name="Masignani V."/>
        </authorList>
    </citation>
    <scope>NUCLEOTIDE SEQUENCE [LARGE SCALE GENOMIC DNA]</scope>
    <source>
        <strain>Taiwan19F-14</strain>
    </source>
</reference>
<protein>
    <recommendedName>
        <fullName evidence="1">Hydroxyethylthiazole kinase 2</fullName>
        <ecNumber evidence="1">2.7.1.50</ecNumber>
    </recommendedName>
    <alternativeName>
        <fullName evidence="1">4-methyl-5-beta-hydroxyethylthiazole kinase 2</fullName>
        <shortName evidence="1">TH kinase 2</shortName>
        <shortName evidence="1">Thz kinase 2</shortName>
    </alternativeName>
</protein>
<sequence length="267" mass="29194">MQEFTNPFPIDSSSLIHCMTNEISCEMLANGILALGCKPVMADDPREVLDFTKQSQALFINLGHLSAEKEKAIRIAASYAAQVCLPMVVDAVGVTTSSIRKSLVKDLLDYRPTVLKGNMSEIRSLVGLKHHGVGVDASAKDQETEDLLQVLKDWCQTYPGMSFLVTGPKDLIVSENQVAVLENGCTELDWITGTGDLVGALTAVFLSQGKTGFEASCLAVSYLNIAAEKIVVQGMGLEEFRYQVLNQLSLLRRDENWLDTIKGEAYE</sequence>
<gene>
    <name evidence="1" type="primary">thiM2</name>
    <name type="ordered locus">SPT_0740</name>
</gene>
<proteinExistence type="inferred from homology"/>
<accession>C1CQI9</accession>
<organism>
    <name type="scientific">Streptococcus pneumoniae (strain Taiwan19F-14)</name>
    <dbReference type="NCBI Taxonomy" id="487213"/>
    <lineage>
        <taxon>Bacteria</taxon>
        <taxon>Bacillati</taxon>
        <taxon>Bacillota</taxon>
        <taxon>Bacilli</taxon>
        <taxon>Lactobacillales</taxon>
        <taxon>Streptococcaceae</taxon>
        <taxon>Streptococcus</taxon>
    </lineage>
</organism>
<dbReference type="EC" id="2.7.1.50" evidence="1"/>
<dbReference type="EMBL" id="CP000921">
    <property type="protein sequence ID" value="ACO22523.1"/>
    <property type="molecule type" value="Genomic_DNA"/>
</dbReference>
<dbReference type="RefSeq" id="WP_001155175.1">
    <property type="nucleotide sequence ID" value="NC_012469.1"/>
</dbReference>
<dbReference type="SMR" id="C1CQI9"/>
<dbReference type="KEGG" id="snt:SPT_0740"/>
<dbReference type="HOGENOM" id="CLU_019943_0_0_9"/>
<dbReference type="UniPathway" id="UPA00060">
    <property type="reaction ID" value="UER00139"/>
</dbReference>
<dbReference type="GO" id="GO:0005524">
    <property type="term" value="F:ATP binding"/>
    <property type="evidence" value="ECO:0007669"/>
    <property type="project" value="UniProtKB-UniRule"/>
</dbReference>
<dbReference type="GO" id="GO:0004417">
    <property type="term" value="F:hydroxyethylthiazole kinase activity"/>
    <property type="evidence" value="ECO:0007669"/>
    <property type="project" value="UniProtKB-UniRule"/>
</dbReference>
<dbReference type="GO" id="GO:0000287">
    <property type="term" value="F:magnesium ion binding"/>
    <property type="evidence" value="ECO:0007669"/>
    <property type="project" value="UniProtKB-UniRule"/>
</dbReference>
<dbReference type="GO" id="GO:0009228">
    <property type="term" value="P:thiamine biosynthetic process"/>
    <property type="evidence" value="ECO:0007669"/>
    <property type="project" value="UniProtKB-KW"/>
</dbReference>
<dbReference type="GO" id="GO:0009229">
    <property type="term" value="P:thiamine diphosphate biosynthetic process"/>
    <property type="evidence" value="ECO:0007669"/>
    <property type="project" value="UniProtKB-UniRule"/>
</dbReference>
<dbReference type="CDD" id="cd01170">
    <property type="entry name" value="THZ_kinase"/>
    <property type="match status" value="1"/>
</dbReference>
<dbReference type="Gene3D" id="3.40.1190.20">
    <property type="match status" value="1"/>
</dbReference>
<dbReference type="HAMAP" id="MF_00228">
    <property type="entry name" value="Thz_kinase"/>
    <property type="match status" value="1"/>
</dbReference>
<dbReference type="InterPro" id="IPR000417">
    <property type="entry name" value="Hyethyz_kinase"/>
</dbReference>
<dbReference type="InterPro" id="IPR029056">
    <property type="entry name" value="Ribokinase-like"/>
</dbReference>
<dbReference type="Pfam" id="PF02110">
    <property type="entry name" value="HK"/>
    <property type="match status" value="1"/>
</dbReference>
<dbReference type="PIRSF" id="PIRSF000513">
    <property type="entry name" value="Thz_kinase"/>
    <property type="match status" value="1"/>
</dbReference>
<dbReference type="PRINTS" id="PR01099">
    <property type="entry name" value="HYETHTZKNASE"/>
</dbReference>
<dbReference type="SUPFAM" id="SSF53613">
    <property type="entry name" value="Ribokinase-like"/>
    <property type="match status" value="1"/>
</dbReference>
<comment type="function">
    <text evidence="1">Catalyzes the phosphorylation of the hydroxyl group of 4-methyl-5-beta-hydroxyethylthiazole (THZ).</text>
</comment>
<comment type="catalytic activity">
    <reaction evidence="1">
        <text>5-(2-hydroxyethyl)-4-methylthiazole + ATP = 4-methyl-5-(2-phosphooxyethyl)-thiazole + ADP + H(+)</text>
        <dbReference type="Rhea" id="RHEA:24212"/>
        <dbReference type="ChEBI" id="CHEBI:15378"/>
        <dbReference type="ChEBI" id="CHEBI:17957"/>
        <dbReference type="ChEBI" id="CHEBI:30616"/>
        <dbReference type="ChEBI" id="CHEBI:58296"/>
        <dbReference type="ChEBI" id="CHEBI:456216"/>
        <dbReference type="EC" id="2.7.1.50"/>
    </reaction>
</comment>
<comment type="cofactor">
    <cofactor evidence="1">
        <name>Mg(2+)</name>
        <dbReference type="ChEBI" id="CHEBI:18420"/>
    </cofactor>
</comment>
<comment type="pathway">
    <text evidence="1">Cofactor biosynthesis; thiamine diphosphate biosynthesis; 4-methyl-5-(2-phosphoethyl)-thiazole from 5-(2-hydroxyethyl)-4-methylthiazole: step 1/1.</text>
</comment>
<comment type="similarity">
    <text evidence="1">Belongs to the Thz kinase family.</text>
</comment>